<organism>
    <name type="scientific">Escherichia coli O81 (strain ED1a)</name>
    <dbReference type="NCBI Taxonomy" id="585397"/>
    <lineage>
        <taxon>Bacteria</taxon>
        <taxon>Pseudomonadati</taxon>
        <taxon>Pseudomonadota</taxon>
        <taxon>Gammaproteobacteria</taxon>
        <taxon>Enterobacterales</taxon>
        <taxon>Enterobacteriaceae</taxon>
        <taxon>Escherichia</taxon>
    </lineage>
</organism>
<feature type="chain" id="PRO_1000146996" description="Protein Smg">
    <location>
        <begin position="1"/>
        <end position="157"/>
    </location>
</feature>
<sequence>MFDVLMYLFETYIHTEAELRVDQDKLEQDLTDAGFDREDIYNALLWLEKLADYQEGLAEPMQLASDPLSMRIYTPEECERLDASCRGFLLFLEQIQVLNLETREMVIERVLALDTAEFDLEDLKWVILMVLFNIPGCENAYQQMEELLFEVNEGMLH</sequence>
<reference key="1">
    <citation type="journal article" date="2009" name="PLoS Genet.">
        <title>Organised genome dynamics in the Escherichia coli species results in highly diverse adaptive paths.</title>
        <authorList>
            <person name="Touchon M."/>
            <person name="Hoede C."/>
            <person name="Tenaillon O."/>
            <person name="Barbe V."/>
            <person name="Baeriswyl S."/>
            <person name="Bidet P."/>
            <person name="Bingen E."/>
            <person name="Bonacorsi S."/>
            <person name="Bouchier C."/>
            <person name="Bouvet O."/>
            <person name="Calteau A."/>
            <person name="Chiapello H."/>
            <person name="Clermont O."/>
            <person name="Cruveiller S."/>
            <person name="Danchin A."/>
            <person name="Diard M."/>
            <person name="Dossat C."/>
            <person name="Karoui M.E."/>
            <person name="Frapy E."/>
            <person name="Garry L."/>
            <person name="Ghigo J.M."/>
            <person name="Gilles A.M."/>
            <person name="Johnson J."/>
            <person name="Le Bouguenec C."/>
            <person name="Lescat M."/>
            <person name="Mangenot S."/>
            <person name="Martinez-Jehanne V."/>
            <person name="Matic I."/>
            <person name="Nassif X."/>
            <person name="Oztas S."/>
            <person name="Petit M.A."/>
            <person name="Pichon C."/>
            <person name="Rouy Z."/>
            <person name="Ruf C.S."/>
            <person name="Schneider D."/>
            <person name="Tourret J."/>
            <person name="Vacherie B."/>
            <person name="Vallenet D."/>
            <person name="Medigue C."/>
            <person name="Rocha E.P.C."/>
            <person name="Denamur E."/>
        </authorList>
    </citation>
    <scope>NUCLEOTIDE SEQUENCE [LARGE SCALE GENOMIC DNA]</scope>
    <source>
        <strain>ED1a</strain>
    </source>
</reference>
<dbReference type="EMBL" id="CU928162">
    <property type="protein sequence ID" value="CAR09943.1"/>
    <property type="molecule type" value="Genomic_DNA"/>
</dbReference>
<dbReference type="RefSeq" id="WP_000460672.1">
    <property type="nucleotide sequence ID" value="NC_011745.1"/>
</dbReference>
<dbReference type="SMR" id="B7N0S5"/>
<dbReference type="GeneID" id="86948148"/>
<dbReference type="KEGG" id="ecq:ECED1_3948"/>
<dbReference type="HOGENOM" id="CLU_133242_0_0_6"/>
<dbReference type="Proteomes" id="UP000000748">
    <property type="component" value="Chromosome"/>
</dbReference>
<dbReference type="HAMAP" id="MF_00598">
    <property type="entry name" value="Smg"/>
    <property type="match status" value="1"/>
</dbReference>
<dbReference type="InterPro" id="IPR007456">
    <property type="entry name" value="Smg"/>
</dbReference>
<dbReference type="NCBIfam" id="NF002897">
    <property type="entry name" value="PRK03430.1"/>
    <property type="match status" value="1"/>
</dbReference>
<dbReference type="PANTHER" id="PTHR38692">
    <property type="entry name" value="PROTEIN SMG"/>
    <property type="match status" value="1"/>
</dbReference>
<dbReference type="PANTHER" id="PTHR38692:SF1">
    <property type="entry name" value="PROTEIN SMG"/>
    <property type="match status" value="1"/>
</dbReference>
<dbReference type="Pfam" id="PF04361">
    <property type="entry name" value="DUF494"/>
    <property type="match status" value="1"/>
</dbReference>
<name>SMG_ECO81</name>
<proteinExistence type="inferred from homology"/>
<gene>
    <name evidence="1" type="primary">smg</name>
    <name type="ordered locus">ECED1_3948</name>
</gene>
<evidence type="ECO:0000255" key="1">
    <source>
        <dbReference type="HAMAP-Rule" id="MF_00598"/>
    </source>
</evidence>
<protein>
    <recommendedName>
        <fullName evidence="1">Protein Smg</fullName>
    </recommendedName>
</protein>
<accession>B7N0S5</accession>
<comment type="similarity">
    <text evidence="1">Belongs to the Smg family.</text>
</comment>